<comment type="function">
    <text evidence="1">Part of the high-affinity ATP-driven potassium transport (or Kdp) system, which catalyzes the hydrolysis of ATP coupled with the electrogenic transport of potassium into the cytoplasm. This subunit is responsible for energy coupling to the transport system and for the release of the potassium ions to the cytoplasm.</text>
</comment>
<comment type="catalytic activity">
    <reaction evidence="1">
        <text>K(+)(out) + ATP + H2O = K(+)(in) + ADP + phosphate + H(+)</text>
        <dbReference type="Rhea" id="RHEA:16777"/>
        <dbReference type="ChEBI" id="CHEBI:15377"/>
        <dbReference type="ChEBI" id="CHEBI:15378"/>
        <dbReference type="ChEBI" id="CHEBI:29103"/>
        <dbReference type="ChEBI" id="CHEBI:30616"/>
        <dbReference type="ChEBI" id="CHEBI:43474"/>
        <dbReference type="ChEBI" id="CHEBI:456216"/>
        <dbReference type="EC" id="7.2.2.6"/>
    </reaction>
    <physiologicalReaction direction="left-to-right" evidence="1">
        <dbReference type="Rhea" id="RHEA:16778"/>
    </physiologicalReaction>
</comment>
<comment type="subunit">
    <text evidence="1">The system is composed of three essential subunits: KdpA, KdpB and KdpC.</text>
</comment>
<comment type="subcellular location">
    <subcellularLocation>
        <location evidence="1">Cell inner membrane</location>
        <topology evidence="1">Multi-pass membrane protein</topology>
    </subcellularLocation>
</comment>
<comment type="similarity">
    <text evidence="1">Belongs to the cation transport ATPase (P-type) (TC 3.A.3) family. Type IA subfamily.</text>
</comment>
<organism>
    <name type="scientific">Mesorhizobium japonicum (strain LMG 29417 / CECT 9101 / MAFF 303099)</name>
    <name type="common">Mesorhizobium loti (strain MAFF 303099)</name>
    <dbReference type="NCBI Taxonomy" id="266835"/>
    <lineage>
        <taxon>Bacteria</taxon>
        <taxon>Pseudomonadati</taxon>
        <taxon>Pseudomonadota</taxon>
        <taxon>Alphaproteobacteria</taxon>
        <taxon>Hyphomicrobiales</taxon>
        <taxon>Phyllobacteriaceae</taxon>
        <taxon>Mesorhizobium</taxon>
    </lineage>
</organism>
<protein>
    <recommendedName>
        <fullName evidence="1">Potassium-transporting ATPase ATP-binding subunit</fullName>
        <ecNumber evidence="1">7.2.2.6</ecNumber>
    </recommendedName>
    <alternativeName>
        <fullName evidence="1">ATP phosphohydrolase [potassium-transporting] B chain</fullName>
    </alternativeName>
    <alternativeName>
        <fullName evidence="1">Potassium-binding and translocating subunit B</fullName>
    </alternativeName>
    <alternativeName>
        <fullName evidence="1">Potassium-translocating ATPase B chain</fullName>
    </alternativeName>
</protein>
<dbReference type="EC" id="7.2.2.6" evidence="1"/>
<dbReference type="EMBL" id="BA000012">
    <property type="protein sequence ID" value="BAB50090.1"/>
    <property type="molecule type" value="Genomic_DNA"/>
</dbReference>
<dbReference type="RefSeq" id="WP_010911437.1">
    <property type="nucleotide sequence ID" value="NC_002678.2"/>
</dbReference>
<dbReference type="SMR" id="Q98GX6"/>
<dbReference type="KEGG" id="mlo:mll3130"/>
<dbReference type="PATRIC" id="fig|266835.9.peg.2495"/>
<dbReference type="eggNOG" id="COG2216">
    <property type="taxonomic scope" value="Bacteria"/>
</dbReference>
<dbReference type="HOGENOM" id="CLU_025728_2_0_5"/>
<dbReference type="Proteomes" id="UP000000552">
    <property type="component" value="Chromosome"/>
</dbReference>
<dbReference type="GO" id="GO:0005886">
    <property type="term" value="C:plasma membrane"/>
    <property type="evidence" value="ECO:0007669"/>
    <property type="project" value="UniProtKB-SubCell"/>
</dbReference>
<dbReference type="GO" id="GO:0005524">
    <property type="term" value="F:ATP binding"/>
    <property type="evidence" value="ECO:0007669"/>
    <property type="project" value="UniProtKB-UniRule"/>
</dbReference>
<dbReference type="GO" id="GO:0016887">
    <property type="term" value="F:ATP hydrolysis activity"/>
    <property type="evidence" value="ECO:0007669"/>
    <property type="project" value="InterPro"/>
</dbReference>
<dbReference type="GO" id="GO:0000287">
    <property type="term" value="F:magnesium ion binding"/>
    <property type="evidence" value="ECO:0007669"/>
    <property type="project" value="UniProtKB-UniRule"/>
</dbReference>
<dbReference type="GO" id="GO:0008556">
    <property type="term" value="F:P-type potassium transmembrane transporter activity"/>
    <property type="evidence" value="ECO:0007669"/>
    <property type="project" value="UniProtKB-UniRule"/>
</dbReference>
<dbReference type="CDD" id="cd02078">
    <property type="entry name" value="P-type_ATPase_K"/>
    <property type="match status" value="1"/>
</dbReference>
<dbReference type="FunFam" id="2.70.150.10:FF:000033">
    <property type="entry name" value="Potassium-transporting ATPase ATP-binding subunit"/>
    <property type="match status" value="1"/>
</dbReference>
<dbReference type="FunFam" id="3.40.1110.10:FF:000007">
    <property type="entry name" value="Potassium-transporting ATPase ATP-binding subunit"/>
    <property type="match status" value="1"/>
</dbReference>
<dbReference type="Gene3D" id="3.40.1110.10">
    <property type="entry name" value="Calcium-transporting ATPase, cytoplasmic domain N"/>
    <property type="match status" value="1"/>
</dbReference>
<dbReference type="Gene3D" id="2.70.150.10">
    <property type="entry name" value="Calcium-transporting ATPase, cytoplasmic transduction domain A"/>
    <property type="match status" value="1"/>
</dbReference>
<dbReference type="Gene3D" id="3.40.50.1000">
    <property type="entry name" value="HAD superfamily/HAD-like"/>
    <property type="match status" value="1"/>
</dbReference>
<dbReference type="HAMAP" id="MF_00285">
    <property type="entry name" value="KdpB"/>
    <property type="match status" value="1"/>
</dbReference>
<dbReference type="InterPro" id="IPR023299">
    <property type="entry name" value="ATPase_P-typ_cyto_dom_N"/>
</dbReference>
<dbReference type="InterPro" id="IPR018303">
    <property type="entry name" value="ATPase_P-typ_P_site"/>
</dbReference>
<dbReference type="InterPro" id="IPR023298">
    <property type="entry name" value="ATPase_P-typ_TM_dom_sf"/>
</dbReference>
<dbReference type="InterPro" id="IPR008250">
    <property type="entry name" value="ATPase_P-typ_transduc_dom_A_sf"/>
</dbReference>
<dbReference type="InterPro" id="IPR036412">
    <property type="entry name" value="HAD-like_sf"/>
</dbReference>
<dbReference type="InterPro" id="IPR023214">
    <property type="entry name" value="HAD_sf"/>
</dbReference>
<dbReference type="InterPro" id="IPR006391">
    <property type="entry name" value="P-type_ATPase_bsu_IA"/>
</dbReference>
<dbReference type="InterPro" id="IPR001757">
    <property type="entry name" value="P_typ_ATPase"/>
</dbReference>
<dbReference type="InterPro" id="IPR044492">
    <property type="entry name" value="P_typ_ATPase_HD_dom"/>
</dbReference>
<dbReference type="NCBIfam" id="TIGR01494">
    <property type="entry name" value="ATPase_P-type"/>
    <property type="match status" value="2"/>
</dbReference>
<dbReference type="NCBIfam" id="TIGR01497">
    <property type="entry name" value="kdpB"/>
    <property type="match status" value="1"/>
</dbReference>
<dbReference type="PANTHER" id="PTHR43743">
    <property type="entry name" value="POTASSIUM-TRANSPORTING ATPASE ATP-BINDING SUBUNIT"/>
    <property type="match status" value="1"/>
</dbReference>
<dbReference type="PANTHER" id="PTHR43743:SF1">
    <property type="entry name" value="POTASSIUM-TRANSPORTING ATPASE ATP-BINDING SUBUNIT"/>
    <property type="match status" value="1"/>
</dbReference>
<dbReference type="Pfam" id="PF00122">
    <property type="entry name" value="E1-E2_ATPase"/>
    <property type="match status" value="1"/>
</dbReference>
<dbReference type="Pfam" id="PF00702">
    <property type="entry name" value="Hydrolase"/>
    <property type="match status" value="1"/>
</dbReference>
<dbReference type="PRINTS" id="PR00119">
    <property type="entry name" value="CATATPASE"/>
</dbReference>
<dbReference type="SFLD" id="SFLDG00002">
    <property type="entry name" value="C1.7:_P-type_atpase_like"/>
    <property type="match status" value="1"/>
</dbReference>
<dbReference type="SFLD" id="SFLDF00027">
    <property type="entry name" value="p-type_atpase"/>
    <property type="match status" value="1"/>
</dbReference>
<dbReference type="SUPFAM" id="SSF81653">
    <property type="entry name" value="Calcium ATPase, transduction domain A"/>
    <property type="match status" value="1"/>
</dbReference>
<dbReference type="SUPFAM" id="SSF81665">
    <property type="entry name" value="Calcium ATPase, transmembrane domain M"/>
    <property type="match status" value="1"/>
</dbReference>
<dbReference type="SUPFAM" id="SSF56784">
    <property type="entry name" value="HAD-like"/>
    <property type="match status" value="1"/>
</dbReference>
<dbReference type="PROSITE" id="PS00154">
    <property type="entry name" value="ATPASE_E1_E2"/>
    <property type="match status" value="1"/>
</dbReference>
<proteinExistence type="inferred from homology"/>
<reference key="1">
    <citation type="journal article" date="2000" name="DNA Res.">
        <title>Complete genome structure of the nitrogen-fixing symbiotic bacterium Mesorhizobium loti.</title>
        <authorList>
            <person name="Kaneko T."/>
            <person name="Nakamura Y."/>
            <person name="Sato S."/>
            <person name="Asamizu E."/>
            <person name="Kato T."/>
            <person name="Sasamoto S."/>
            <person name="Watanabe A."/>
            <person name="Idesawa K."/>
            <person name="Ishikawa A."/>
            <person name="Kawashima K."/>
            <person name="Kimura T."/>
            <person name="Kishida Y."/>
            <person name="Kiyokawa C."/>
            <person name="Kohara M."/>
            <person name="Matsumoto M."/>
            <person name="Matsuno A."/>
            <person name="Mochizuki Y."/>
            <person name="Nakayama S."/>
            <person name="Nakazaki N."/>
            <person name="Shimpo S."/>
            <person name="Sugimoto M."/>
            <person name="Takeuchi C."/>
            <person name="Yamada M."/>
            <person name="Tabata S."/>
        </authorList>
    </citation>
    <scope>NUCLEOTIDE SEQUENCE [LARGE SCALE GENOMIC DNA]</scope>
    <source>
        <strain>LMG 29417 / CECT 9101 / MAFF 303099</strain>
    </source>
</reference>
<gene>
    <name evidence="1" type="primary">kdpB</name>
    <name type="ordered locus">mll3130</name>
</gene>
<keyword id="KW-0067">ATP-binding</keyword>
<keyword id="KW-0997">Cell inner membrane</keyword>
<keyword id="KW-1003">Cell membrane</keyword>
<keyword id="KW-0406">Ion transport</keyword>
<keyword id="KW-0460">Magnesium</keyword>
<keyword id="KW-0472">Membrane</keyword>
<keyword id="KW-0479">Metal-binding</keyword>
<keyword id="KW-0547">Nucleotide-binding</keyword>
<keyword id="KW-0597">Phosphoprotein</keyword>
<keyword id="KW-0630">Potassium</keyword>
<keyword id="KW-0633">Potassium transport</keyword>
<keyword id="KW-1278">Translocase</keyword>
<keyword id="KW-0812">Transmembrane</keyword>
<keyword id="KW-1133">Transmembrane helix</keyword>
<keyword id="KW-0813">Transport</keyword>
<feature type="chain" id="PRO_0000046130" description="Potassium-transporting ATPase ATP-binding subunit">
    <location>
        <begin position="1"/>
        <end position="697"/>
    </location>
</feature>
<feature type="transmembrane region" description="Helical" evidence="1">
    <location>
        <begin position="36"/>
        <end position="56"/>
    </location>
</feature>
<feature type="transmembrane region" description="Helical" evidence="1">
    <location>
        <begin position="66"/>
        <end position="86"/>
    </location>
</feature>
<feature type="transmembrane region" description="Helical" evidence="1">
    <location>
        <begin position="218"/>
        <end position="238"/>
    </location>
</feature>
<feature type="transmembrane region" description="Helical" evidence="1">
    <location>
        <begin position="253"/>
        <end position="273"/>
    </location>
</feature>
<feature type="transmembrane region" description="Helical" evidence="1">
    <location>
        <begin position="595"/>
        <end position="615"/>
    </location>
</feature>
<feature type="transmembrane region" description="Helical" evidence="1">
    <location>
        <begin position="631"/>
        <end position="651"/>
    </location>
</feature>
<feature type="transmembrane region" description="Helical" evidence="1">
    <location>
        <begin position="669"/>
        <end position="689"/>
    </location>
</feature>
<feature type="active site" description="4-aspartylphosphate intermediate" evidence="1">
    <location>
        <position position="306"/>
    </location>
</feature>
<feature type="binding site" evidence="1">
    <location>
        <position position="343"/>
    </location>
    <ligand>
        <name>ATP</name>
        <dbReference type="ChEBI" id="CHEBI:30616"/>
    </ligand>
</feature>
<feature type="binding site" evidence="1">
    <location>
        <position position="347"/>
    </location>
    <ligand>
        <name>ATP</name>
        <dbReference type="ChEBI" id="CHEBI:30616"/>
    </ligand>
</feature>
<feature type="binding site" evidence="1">
    <location>
        <begin position="376"/>
        <end position="383"/>
    </location>
    <ligand>
        <name>ATP</name>
        <dbReference type="ChEBI" id="CHEBI:30616"/>
    </ligand>
</feature>
<feature type="binding site" evidence="1">
    <location>
        <position position="394"/>
    </location>
    <ligand>
        <name>ATP</name>
        <dbReference type="ChEBI" id="CHEBI:30616"/>
    </ligand>
</feature>
<feature type="binding site" evidence="1">
    <location>
        <position position="526"/>
    </location>
    <ligand>
        <name>Mg(2+)</name>
        <dbReference type="ChEBI" id="CHEBI:18420"/>
    </ligand>
</feature>
<feature type="binding site" evidence="1">
    <location>
        <position position="530"/>
    </location>
    <ligand>
        <name>Mg(2+)</name>
        <dbReference type="ChEBI" id="CHEBI:18420"/>
    </ligand>
</feature>
<evidence type="ECO:0000255" key="1">
    <source>
        <dbReference type="HAMAP-Rule" id="MF_00285"/>
    </source>
</evidence>
<name>KDPB_RHILO</name>
<accession>Q98GX6</accession>
<sequence length="697" mass="73406">MSQLKSSAIMDARILWPAFGGAFRKLDPRTLARNPVMFVVAIVSALTSVLFLRDLITGGGDLRFTLQIIIWLWFTVLFANFAEAVAEGRGKAQADSLRKARTETQAKLLAGEDRSKFKLVPGTSLKVGDIVLVEAGDIIPSDGEVVEGVASVNEAAITGESAPVIRESGGDRSAVTGGTQVLSDWIRVRITAAAGHTFLDRMISLVEGAERQKTPNEIALNILLVGMTLIFVLATATIPSFASYSGGYISVTVLVALFVTLIPTTIGALLSAIGIAGMDRLVRFNVLAMSGRAVEAAGDVDTLLLDKTGTITLGNRQATDFRPVKGVTEQELADAAQLASLADETPEGRSIVVLAKEKYGIRARDMATLHATFVPFTAQTRMSGVDIDGSSVRKGAVDSVLAHVNQSTVASHATRPNSDTIRDLQAIADEVAKSGGTPLAVERDGRLLGVVHLKDIVKGGIRERFAELRKMGIRTVMITGDNPMTAAAIAAEAGVDDFLAQATPEDKLKLIRDEQAKGKLVAMCGDGTNDAPALAQADVGVAMNTGTVAAREAGNMVDLDSDPTKLIEIVEIGKALLMTRGSLTTFSIANDVAKYFAIIPAMFAVFYVAPGQSTGPLQALNIMHLATPQSAILSAIIFNALIIIALIPLSLRGVKYRAIGAGALLSRNLLVYGLGGIIVPFVGIKIIDMAVTALGLA</sequence>